<protein>
    <recommendedName>
        <fullName>Putative C-type lectin protein FPV003/FPV258</fullName>
    </recommendedName>
</protein>
<gene>
    <name type="ordered locus">FPV003</name>
</gene>
<gene>
    <name type="ordered locus">FPV258</name>
</gene>
<name>V003_FOWPN</name>
<feature type="chain" id="PRO_0000046725" description="Putative C-type lectin protein FPV003/FPV258">
    <location>
        <begin position="1"/>
        <end position="123"/>
    </location>
</feature>
<feature type="domain" description="C-type lectin">
    <location>
        <begin position="21"/>
        <end position="122"/>
    </location>
</feature>
<proteinExistence type="predicted"/>
<organism>
    <name type="scientific">Fowlpox virus (strain NVSL)</name>
    <name type="common">FPV</name>
    <dbReference type="NCBI Taxonomy" id="928301"/>
    <lineage>
        <taxon>Viruses</taxon>
        <taxon>Varidnaviria</taxon>
        <taxon>Bamfordvirae</taxon>
        <taxon>Nucleocytoviricota</taxon>
        <taxon>Pokkesviricetes</taxon>
        <taxon>Chitovirales</taxon>
        <taxon>Poxviridae</taxon>
        <taxon>Chordopoxvirinae</taxon>
        <taxon>Avipoxvirus</taxon>
        <taxon>Fowlpox virus</taxon>
    </lineage>
</organism>
<keyword id="KW-0430">Lectin</keyword>
<keyword id="KW-1185">Reference proteome</keyword>
<dbReference type="EMBL" id="AF198100">
    <property type="protein sequence ID" value="AAF44605.1"/>
    <property type="molecule type" value="Genomic_DNA"/>
</dbReference>
<dbReference type="EMBL" id="AF198100">
    <property type="protein sequence ID" value="AAF44606.1"/>
    <property type="molecule type" value="Genomic_DNA"/>
</dbReference>
<dbReference type="PIR" id="C31685">
    <property type="entry name" value="C31685"/>
</dbReference>
<dbReference type="RefSeq" id="NP_038966.1">
    <property type="nucleotide sequence ID" value="NC_002188.1"/>
</dbReference>
<dbReference type="RefSeq" id="NP_039221.1">
    <property type="nucleotide sequence ID" value="NC_002188.1"/>
</dbReference>
<dbReference type="SMR" id="Q9ICC1"/>
<dbReference type="GeneID" id="1486833"/>
<dbReference type="GeneID" id="1486834"/>
<dbReference type="KEGG" id="vg:1486833"/>
<dbReference type="KEGG" id="vg:1486834"/>
<dbReference type="Proteomes" id="UP000008597">
    <property type="component" value="Segment"/>
</dbReference>
<dbReference type="GO" id="GO:0030246">
    <property type="term" value="F:carbohydrate binding"/>
    <property type="evidence" value="ECO:0007669"/>
    <property type="project" value="UniProtKB-KW"/>
</dbReference>
<dbReference type="Gene3D" id="3.10.100.10">
    <property type="entry name" value="Mannose-Binding Protein A, subunit A"/>
    <property type="match status" value="1"/>
</dbReference>
<dbReference type="InterPro" id="IPR016186">
    <property type="entry name" value="C-type_lectin-like/link_sf"/>
</dbReference>
<dbReference type="InterPro" id="IPR016187">
    <property type="entry name" value="CTDL_fold"/>
</dbReference>
<dbReference type="SUPFAM" id="SSF56436">
    <property type="entry name" value="C-type lectin-like"/>
    <property type="match status" value="1"/>
</dbReference>
<sequence>MKSLILIAMLLMLDCANSLNCRGPYTSYNNKCIWVNRLDKMHHKKTYSEASTTCLITFPMGTLARRSLIDNEKDMKFISKFGMGQSLWIRDDKKPEVGKCAYTDGKTFGFSPCNATYGFVCID</sequence>
<organismHost>
    <name type="scientific">Vertebrata</name>
    <dbReference type="NCBI Taxonomy" id="7742"/>
</organismHost>
<accession>Q9ICC1</accession>
<reference key="1">
    <citation type="journal article" date="2000" name="J. Virol.">
        <title>The genome of fowlpox virus.</title>
        <authorList>
            <person name="Afonso C.L."/>
            <person name="Tulman E.R."/>
            <person name="Lu Z."/>
            <person name="Zsak L."/>
            <person name="Kutish G.F."/>
            <person name="Rock D.L."/>
        </authorList>
    </citation>
    <scope>NUCLEOTIDE SEQUENCE [LARGE SCALE GENOMIC DNA]</scope>
</reference>